<protein>
    <recommendedName>
        <fullName>Uncharacterized protein RP458</fullName>
    </recommendedName>
</protein>
<reference key="1">
    <citation type="journal article" date="1998" name="Nature">
        <title>The genome sequence of Rickettsia prowazekii and the origin of mitochondria.</title>
        <authorList>
            <person name="Andersson S.G.E."/>
            <person name="Zomorodipour A."/>
            <person name="Andersson J.O."/>
            <person name="Sicheritz-Ponten T."/>
            <person name="Alsmark U.C.M."/>
            <person name="Podowski R.M."/>
            <person name="Naeslund A.K."/>
            <person name="Eriksson A.-S."/>
            <person name="Winkler H.H."/>
            <person name="Kurland C.G."/>
        </authorList>
    </citation>
    <scope>NUCLEOTIDE SEQUENCE [LARGE SCALE GENOMIC DNA]</scope>
    <source>
        <strain>Madrid E</strain>
    </source>
</reference>
<dbReference type="EMBL" id="AJ235271">
    <property type="protein sequence ID" value="CAA14914.1"/>
    <property type="molecule type" value="Genomic_DNA"/>
</dbReference>
<dbReference type="PIR" id="H71704">
    <property type="entry name" value="H71704"/>
</dbReference>
<dbReference type="RefSeq" id="NP_220838.1">
    <property type="nucleotide sequence ID" value="NC_000963.1"/>
</dbReference>
<dbReference type="RefSeq" id="WP_004599491.1">
    <property type="nucleotide sequence ID" value="NC_000963.1"/>
</dbReference>
<dbReference type="SMR" id="Q9ZD85"/>
<dbReference type="STRING" id="272947.gene:17555538"/>
<dbReference type="EnsemblBacteria" id="CAA14914">
    <property type="protein sequence ID" value="CAA14914"/>
    <property type="gene ID" value="CAA14914"/>
</dbReference>
<dbReference type="KEGG" id="rpr:RP458"/>
<dbReference type="PATRIC" id="fig|272947.5.peg.470"/>
<dbReference type="HOGENOM" id="CLU_112906_0_0_5"/>
<dbReference type="OrthoDB" id="7160301at2"/>
<dbReference type="Proteomes" id="UP000002480">
    <property type="component" value="Chromosome"/>
</dbReference>
<dbReference type="InterPro" id="IPR024386">
    <property type="entry name" value="DUF2532"/>
</dbReference>
<dbReference type="Pfam" id="PF10811">
    <property type="entry name" value="DUF2532"/>
    <property type="match status" value="1"/>
</dbReference>
<organism>
    <name type="scientific">Rickettsia prowazekii (strain Madrid E)</name>
    <dbReference type="NCBI Taxonomy" id="272947"/>
    <lineage>
        <taxon>Bacteria</taxon>
        <taxon>Pseudomonadati</taxon>
        <taxon>Pseudomonadota</taxon>
        <taxon>Alphaproteobacteria</taxon>
        <taxon>Rickettsiales</taxon>
        <taxon>Rickettsiaceae</taxon>
        <taxon>Rickettsieae</taxon>
        <taxon>Rickettsia</taxon>
        <taxon>typhus group</taxon>
    </lineage>
</organism>
<keyword id="KW-1185">Reference proteome</keyword>
<feature type="chain" id="PRO_0000101374" description="Uncharacterized protein RP458">
    <location>
        <begin position="1"/>
        <end position="163"/>
    </location>
</feature>
<gene>
    <name type="ordered locus">RP458</name>
</gene>
<accession>Q9ZD85</accession>
<sequence>MNIKLVTYFLILVSSLKVNADLNHIQDSFKYQEAEQLTIELPWNDCTAIHKFLEEKLFFSEQQIKKENKIHEKYKQFYLQHNNKLSDFSMQFLEKKSEINSVETLISGFLKFCEDNFQTSKSKSHSLNFFQKQQDQWLHNIRNENYKTYYKKKYEDNTFRNIN</sequence>
<name>Y458_RICPR</name>
<proteinExistence type="predicted"/>